<reference key="1">
    <citation type="journal article" date="2003" name="Nat. Biotechnol.">
        <title>The genome sequence of the entomopathogenic bacterium Photorhabdus luminescens.</title>
        <authorList>
            <person name="Duchaud E."/>
            <person name="Rusniok C."/>
            <person name="Frangeul L."/>
            <person name="Buchrieser C."/>
            <person name="Givaudan A."/>
            <person name="Taourit S."/>
            <person name="Bocs S."/>
            <person name="Boursaux-Eude C."/>
            <person name="Chandler M."/>
            <person name="Charles J.-F."/>
            <person name="Dassa E."/>
            <person name="Derose R."/>
            <person name="Derzelle S."/>
            <person name="Freyssinet G."/>
            <person name="Gaudriault S."/>
            <person name="Medigue C."/>
            <person name="Lanois A."/>
            <person name="Powell K."/>
            <person name="Siguier P."/>
            <person name="Vincent R."/>
            <person name="Wingate V."/>
            <person name="Zouine M."/>
            <person name="Glaser P."/>
            <person name="Boemare N."/>
            <person name="Danchin A."/>
            <person name="Kunst F."/>
        </authorList>
    </citation>
    <scope>NUCLEOTIDE SEQUENCE [LARGE SCALE GENOMIC DNA]</scope>
    <source>
        <strain>DSM 15139 / CIP 105565 / TT01</strain>
    </source>
</reference>
<organism>
    <name type="scientific">Photorhabdus laumondii subsp. laumondii (strain DSM 15139 / CIP 105565 / TT01)</name>
    <name type="common">Photorhabdus luminescens subsp. laumondii</name>
    <dbReference type="NCBI Taxonomy" id="243265"/>
    <lineage>
        <taxon>Bacteria</taxon>
        <taxon>Pseudomonadati</taxon>
        <taxon>Pseudomonadota</taxon>
        <taxon>Gammaproteobacteria</taxon>
        <taxon>Enterobacterales</taxon>
        <taxon>Morganellaceae</taxon>
        <taxon>Photorhabdus</taxon>
    </lineage>
</organism>
<name>GLMU_PHOLL</name>
<keyword id="KW-0012">Acyltransferase</keyword>
<keyword id="KW-0133">Cell shape</keyword>
<keyword id="KW-0961">Cell wall biogenesis/degradation</keyword>
<keyword id="KW-0963">Cytoplasm</keyword>
<keyword id="KW-0460">Magnesium</keyword>
<keyword id="KW-0479">Metal-binding</keyword>
<keyword id="KW-0511">Multifunctional enzyme</keyword>
<keyword id="KW-0548">Nucleotidyltransferase</keyword>
<keyword id="KW-0573">Peptidoglycan synthesis</keyword>
<keyword id="KW-1185">Reference proteome</keyword>
<keyword id="KW-0677">Repeat</keyword>
<keyword id="KW-0808">Transferase</keyword>
<accession>Q7NA96</accession>
<dbReference type="EC" id="2.7.7.23" evidence="1"/>
<dbReference type="EC" id="2.3.1.157" evidence="1"/>
<dbReference type="EMBL" id="BX571859">
    <property type="protein sequence ID" value="CAE12333.1"/>
    <property type="molecule type" value="Genomic_DNA"/>
</dbReference>
<dbReference type="RefSeq" id="WP_011144451.1">
    <property type="nucleotide sequence ID" value="NC_005126.1"/>
</dbReference>
<dbReference type="SMR" id="Q7NA96"/>
<dbReference type="STRING" id="243265.plu0038"/>
<dbReference type="GeneID" id="48846338"/>
<dbReference type="KEGG" id="plu:plu0038"/>
<dbReference type="eggNOG" id="COG1207">
    <property type="taxonomic scope" value="Bacteria"/>
</dbReference>
<dbReference type="HOGENOM" id="CLU_029499_15_2_6"/>
<dbReference type="OrthoDB" id="9775031at2"/>
<dbReference type="UniPathway" id="UPA00113">
    <property type="reaction ID" value="UER00532"/>
</dbReference>
<dbReference type="UniPathway" id="UPA00113">
    <property type="reaction ID" value="UER00533"/>
</dbReference>
<dbReference type="UniPathway" id="UPA00973"/>
<dbReference type="Proteomes" id="UP000002514">
    <property type="component" value="Chromosome"/>
</dbReference>
<dbReference type="GO" id="GO:0005737">
    <property type="term" value="C:cytoplasm"/>
    <property type="evidence" value="ECO:0007669"/>
    <property type="project" value="UniProtKB-SubCell"/>
</dbReference>
<dbReference type="GO" id="GO:0016020">
    <property type="term" value="C:membrane"/>
    <property type="evidence" value="ECO:0007669"/>
    <property type="project" value="GOC"/>
</dbReference>
<dbReference type="GO" id="GO:0019134">
    <property type="term" value="F:glucosamine-1-phosphate N-acetyltransferase activity"/>
    <property type="evidence" value="ECO:0007669"/>
    <property type="project" value="UniProtKB-UniRule"/>
</dbReference>
<dbReference type="GO" id="GO:0000287">
    <property type="term" value="F:magnesium ion binding"/>
    <property type="evidence" value="ECO:0007669"/>
    <property type="project" value="UniProtKB-UniRule"/>
</dbReference>
<dbReference type="GO" id="GO:0003977">
    <property type="term" value="F:UDP-N-acetylglucosamine diphosphorylase activity"/>
    <property type="evidence" value="ECO:0007669"/>
    <property type="project" value="UniProtKB-UniRule"/>
</dbReference>
<dbReference type="GO" id="GO:0000902">
    <property type="term" value="P:cell morphogenesis"/>
    <property type="evidence" value="ECO:0007669"/>
    <property type="project" value="UniProtKB-UniRule"/>
</dbReference>
<dbReference type="GO" id="GO:0071555">
    <property type="term" value="P:cell wall organization"/>
    <property type="evidence" value="ECO:0007669"/>
    <property type="project" value="UniProtKB-KW"/>
</dbReference>
<dbReference type="GO" id="GO:0009245">
    <property type="term" value="P:lipid A biosynthetic process"/>
    <property type="evidence" value="ECO:0007669"/>
    <property type="project" value="UniProtKB-UniRule"/>
</dbReference>
<dbReference type="GO" id="GO:0009252">
    <property type="term" value="P:peptidoglycan biosynthetic process"/>
    <property type="evidence" value="ECO:0007669"/>
    <property type="project" value="UniProtKB-UniRule"/>
</dbReference>
<dbReference type="GO" id="GO:0008360">
    <property type="term" value="P:regulation of cell shape"/>
    <property type="evidence" value="ECO:0007669"/>
    <property type="project" value="UniProtKB-KW"/>
</dbReference>
<dbReference type="GO" id="GO:0006048">
    <property type="term" value="P:UDP-N-acetylglucosamine biosynthetic process"/>
    <property type="evidence" value="ECO:0007669"/>
    <property type="project" value="UniProtKB-UniPathway"/>
</dbReference>
<dbReference type="CDD" id="cd02540">
    <property type="entry name" value="GT2_GlmU_N_bac"/>
    <property type="match status" value="1"/>
</dbReference>
<dbReference type="CDD" id="cd03353">
    <property type="entry name" value="LbH_GlmU_C"/>
    <property type="match status" value="1"/>
</dbReference>
<dbReference type="FunFam" id="3.90.550.10:FF:000006">
    <property type="entry name" value="Bifunctional protein GlmU"/>
    <property type="match status" value="1"/>
</dbReference>
<dbReference type="Gene3D" id="2.160.10.10">
    <property type="entry name" value="Hexapeptide repeat proteins"/>
    <property type="match status" value="1"/>
</dbReference>
<dbReference type="Gene3D" id="3.90.550.10">
    <property type="entry name" value="Spore Coat Polysaccharide Biosynthesis Protein SpsA, Chain A"/>
    <property type="match status" value="1"/>
</dbReference>
<dbReference type="HAMAP" id="MF_01631">
    <property type="entry name" value="GlmU"/>
    <property type="match status" value="1"/>
</dbReference>
<dbReference type="InterPro" id="IPR005882">
    <property type="entry name" value="Bifunctional_GlmU"/>
</dbReference>
<dbReference type="InterPro" id="IPR050065">
    <property type="entry name" value="GlmU-like"/>
</dbReference>
<dbReference type="InterPro" id="IPR038009">
    <property type="entry name" value="GlmU_C_LbH"/>
</dbReference>
<dbReference type="InterPro" id="IPR001451">
    <property type="entry name" value="Hexapep"/>
</dbReference>
<dbReference type="InterPro" id="IPR018357">
    <property type="entry name" value="Hexapep_transf_CS"/>
</dbReference>
<dbReference type="InterPro" id="IPR025877">
    <property type="entry name" value="MobA-like_NTP_Trfase"/>
</dbReference>
<dbReference type="InterPro" id="IPR029044">
    <property type="entry name" value="Nucleotide-diphossugar_trans"/>
</dbReference>
<dbReference type="InterPro" id="IPR011004">
    <property type="entry name" value="Trimer_LpxA-like_sf"/>
</dbReference>
<dbReference type="NCBIfam" id="TIGR01173">
    <property type="entry name" value="glmU"/>
    <property type="match status" value="1"/>
</dbReference>
<dbReference type="NCBIfam" id="NF006986">
    <property type="entry name" value="PRK09451.1"/>
    <property type="match status" value="1"/>
</dbReference>
<dbReference type="PANTHER" id="PTHR43584:SF3">
    <property type="entry name" value="BIFUNCTIONAL PROTEIN GLMU"/>
    <property type="match status" value="1"/>
</dbReference>
<dbReference type="PANTHER" id="PTHR43584">
    <property type="entry name" value="NUCLEOTIDYL TRANSFERASE"/>
    <property type="match status" value="1"/>
</dbReference>
<dbReference type="Pfam" id="PF00132">
    <property type="entry name" value="Hexapep"/>
    <property type="match status" value="2"/>
</dbReference>
<dbReference type="Pfam" id="PF12804">
    <property type="entry name" value="NTP_transf_3"/>
    <property type="match status" value="1"/>
</dbReference>
<dbReference type="SUPFAM" id="SSF53448">
    <property type="entry name" value="Nucleotide-diphospho-sugar transferases"/>
    <property type="match status" value="1"/>
</dbReference>
<dbReference type="SUPFAM" id="SSF51161">
    <property type="entry name" value="Trimeric LpxA-like enzymes"/>
    <property type="match status" value="1"/>
</dbReference>
<dbReference type="PROSITE" id="PS00101">
    <property type="entry name" value="HEXAPEP_TRANSFERASES"/>
    <property type="match status" value="1"/>
</dbReference>
<sequence length="457" mass="49221">MSNSAKSVVILAAGKGTRMYSDLPKVLHLLAGKPMVQHVIDTAMALGAKNVHLVYGHGGDLIEQTLSDQTLNWVLQAEQLGTGHAMQQAAPHFAGDEDILILYGDVPLIGADTLERLLAVKPEGGIGLLTAILDNPTGYGRIVRENGEVTGIIEQKDATEEQRKINEINTGILVANGSDLKRWLSQLDNNNVQGEYYLTDVIALAYKEGRKIEAVHPTRLSEMEGVNNRLQLSALERIYQSEQAEQLLLAGVMLLDPARFDLRGTLIHGRDVVIDTNVIIEGNVTLGNNVQIGTGCVLKNCIIGDDSIISPYTIVEDSEMETGCTVGPFARLRPGSKLAEKAHVGNFVEMKKSYLGKGSKAGHLTYLGDADIGRDVNIGAGTITCNYDGANKFKTIIGDNVFVGSDTQLVAPVIVAKGATIGAGTTVTKNIAENELVVSRTKQTHIQGWKRPVKEKK</sequence>
<gene>
    <name evidence="1" type="primary">glmU</name>
    <name type="ordered locus">plu0038</name>
</gene>
<feature type="chain" id="PRO_0000233814" description="Bifunctional protein GlmU">
    <location>
        <begin position="1"/>
        <end position="457"/>
    </location>
</feature>
<feature type="region of interest" description="Pyrophosphorylase" evidence="1">
    <location>
        <begin position="1"/>
        <end position="229"/>
    </location>
</feature>
<feature type="region of interest" description="Linker" evidence="1">
    <location>
        <begin position="230"/>
        <end position="250"/>
    </location>
</feature>
<feature type="region of interest" description="N-acetyltransferase" evidence="1">
    <location>
        <begin position="251"/>
        <end position="457"/>
    </location>
</feature>
<feature type="active site" description="Proton acceptor" evidence="1">
    <location>
        <position position="363"/>
    </location>
</feature>
<feature type="binding site" evidence="1">
    <location>
        <begin position="11"/>
        <end position="14"/>
    </location>
    <ligand>
        <name>UDP-N-acetyl-alpha-D-glucosamine</name>
        <dbReference type="ChEBI" id="CHEBI:57705"/>
    </ligand>
</feature>
<feature type="binding site" evidence="1">
    <location>
        <position position="25"/>
    </location>
    <ligand>
        <name>UDP-N-acetyl-alpha-D-glucosamine</name>
        <dbReference type="ChEBI" id="CHEBI:57705"/>
    </ligand>
</feature>
<feature type="binding site" evidence="1">
    <location>
        <position position="76"/>
    </location>
    <ligand>
        <name>UDP-N-acetyl-alpha-D-glucosamine</name>
        <dbReference type="ChEBI" id="CHEBI:57705"/>
    </ligand>
</feature>
<feature type="binding site" evidence="1">
    <location>
        <begin position="81"/>
        <end position="82"/>
    </location>
    <ligand>
        <name>UDP-N-acetyl-alpha-D-glucosamine</name>
        <dbReference type="ChEBI" id="CHEBI:57705"/>
    </ligand>
</feature>
<feature type="binding site" evidence="1">
    <location>
        <begin position="103"/>
        <end position="105"/>
    </location>
    <ligand>
        <name>UDP-N-acetyl-alpha-D-glucosamine</name>
        <dbReference type="ChEBI" id="CHEBI:57705"/>
    </ligand>
</feature>
<feature type="binding site" evidence="1">
    <location>
        <position position="105"/>
    </location>
    <ligand>
        <name>Mg(2+)</name>
        <dbReference type="ChEBI" id="CHEBI:18420"/>
    </ligand>
</feature>
<feature type="binding site" evidence="1">
    <location>
        <position position="140"/>
    </location>
    <ligand>
        <name>UDP-N-acetyl-alpha-D-glucosamine</name>
        <dbReference type="ChEBI" id="CHEBI:57705"/>
    </ligand>
</feature>
<feature type="binding site" evidence="1">
    <location>
        <position position="154"/>
    </location>
    <ligand>
        <name>UDP-N-acetyl-alpha-D-glucosamine</name>
        <dbReference type="ChEBI" id="CHEBI:57705"/>
    </ligand>
</feature>
<feature type="binding site" evidence="1">
    <location>
        <position position="169"/>
    </location>
    <ligand>
        <name>UDP-N-acetyl-alpha-D-glucosamine</name>
        <dbReference type="ChEBI" id="CHEBI:57705"/>
    </ligand>
</feature>
<feature type="binding site" evidence="1">
    <location>
        <position position="227"/>
    </location>
    <ligand>
        <name>Mg(2+)</name>
        <dbReference type="ChEBI" id="CHEBI:18420"/>
    </ligand>
</feature>
<feature type="binding site" evidence="1">
    <location>
        <position position="227"/>
    </location>
    <ligand>
        <name>UDP-N-acetyl-alpha-D-glucosamine</name>
        <dbReference type="ChEBI" id="CHEBI:57705"/>
    </ligand>
</feature>
<feature type="binding site" evidence="1">
    <location>
        <position position="333"/>
    </location>
    <ligand>
        <name>UDP-N-acetyl-alpha-D-glucosamine</name>
        <dbReference type="ChEBI" id="CHEBI:57705"/>
    </ligand>
</feature>
<feature type="binding site" evidence="1">
    <location>
        <position position="351"/>
    </location>
    <ligand>
        <name>UDP-N-acetyl-alpha-D-glucosamine</name>
        <dbReference type="ChEBI" id="CHEBI:57705"/>
    </ligand>
</feature>
<feature type="binding site" evidence="1">
    <location>
        <position position="366"/>
    </location>
    <ligand>
        <name>UDP-N-acetyl-alpha-D-glucosamine</name>
        <dbReference type="ChEBI" id="CHEBI:57705"/>
    </ligand>
</feature>
<feature type="binding site" evidence="1">
    <location>
        <position position="377"/>
    </location>
    <ligand>
        <name>UDP-N-acetyl-alpha-D-glucosamine</name>
        <dbReference type="ChEBI" id="CHEBI:57705"/>
    </ligand>
</feature>
<feature type="binding site" evidence="1">
    <location>
        <position position="380"/>
    </location>
    <ligand>
        <name>acetyl-CoA</name>
        <dbReference type="ChEBI" id="CHEBI:57288"/>
    </ligand>
</feature>
<feature type="binding site" evidence="1">
    <location>
        <begin position="386"/>
        <end position="387"/>
    </location>
    <ligand>
        <name>acetyl-CoA</name>
        <dbReference type="ChEBI" id="CHEBI:57288"/>
    </ligand>
</feature>
<feature type="binding site" evidence="1">
    <location>
        <position position="405"/>
    </location>
    <ligand>
        <name>acetyl-CoA</name>
        <dbReference type="ChEBI" id="CHEBI:57288"/>
    </ligand>
</feature>
<feature type="binding site" evidence="1">
    <location>
        <position position="423"/>
    </location>
    <ligand>
        <name>acetyl-CoA</name>
        <dbReference type="ChEBI" id="CHEBI:57288"/>
    </ligand>
</feature>
<feature type="binding site" evidence="1">
    <location>
        <position position="440"/>
    </location>
    <ligand>
        <name>acetyl-CoA</name>
        <dbReference type="ChEBI" id="CHEBI:57288"/>
    </ligand>
</feature>
<protein>
    <recommendedName>
        <fullName evidence="1">Bifunctional protein GlmU</fullName>
    </recommendedName>
    <domain>
        <recommendedName>
            <fullName evidence="1">UDP-N-acetylglucosamine pyrophosphorylase</fullName>
            <ecNumber evidence="1">2.7.7.23</ecNumber>
        </recommendedName>
        <alternativeName>
            <fullName evidence="1">N-acetylglucosamine-1-phosphate uridyltransferase</fullName>
        </alternativeName>
    </domain>
    <domain>
        <recommendedName>
            <fullName evidence="1">Glucosamine-1-phosphate N-acetyltransferase</fullName>
            <ecNumber evidence="1">2.3.1.157</ecNumber>
        </recommendedName>
    </domain>
</protein>
<proteinExistence type="inferred from homology"/>
<comment type="function">
    <text evidence="1">Catalyzes the last two sequential reactions in the de novo biosynthetic pathway for UDP-N-acetylglucosamine (UDP-GlcNAc). The C-terminal domain catalyzes the transfer of acetyl group from acetyl coenzyme A to glucosamine-1-phosphate (GlcN-1-P) to produce N-acetylglucosamine-1-phosphate (GlcNAc-1-P), which is converted into UDP-GlcNAc by the transfer of uridine 5-monophosphate (from uridine 5-triphosphate), a reaction catalyzed by the N-terminal domain.</text>
</comment>
<comment type="catalytic activity">
    <reaction evidence="1">
        <text>alpha-D-glucosamine 1-phosphate + acetyl-CoA = N-acetyl-alpha-D-glucosamine 1-phosphate + CoA + H(+)</text>
        <dbReference type="Rhea" id="RHEA:13725"/>
        <dbReference type="ChEBI" id="CHEBI:15378"/>
        <dbReference type="ChEBI" id="CHEBI:57287"/>
        <dbReference type="ChEBI" id="CHEBI:57288"/>
        <dbReference type="ChEBI" id="CHEBI:57776"/>
        <dbReference type="ChEBI" id="CHEBI:58516"/>
        <dbReference type="EC" id="2.3.1.157"/>
    </reaction>
</comment>
<comment type="catalytic activity">
    <reaction evidence="1">
        <text>N-acetyl-alpha-D-glucosamine 1-phosphate + UTP + H(+) = UDP-N-acetyl-alpha-D-glucosamine + diphosphate</text>
        <dbReference type="Rhea" id="RHEA:13509"/>
        <dbReference type="ChEBI" id="CHEBI:15378"/>
        <dbReference type="ChEBI" id="CHEBI:33019"/>
        <dbReference type="ChEBI" id="CHEBI:46398"/>
        <dbReference type="ChEBI" id="CHEBI:57705"/>
        <dbReference type="ChEBI" id="CHEBI:57776"/>
        <dbReference type="EC" id="2.7.7.23"/>
    </reaction>
</comment>
<comment type="cofactor">
    <cofactor evidence="1">
        <name>Mg(2+)</name>
        <dbReference type="ChEBI" id="CHEBI:18420"/>
    </cofactor>
    <text evidence="1">Binds 1 Mg(2+) ion per subunit.</text>
</comment>
<comment type="pathway">
    <text evidence="1">Nucleotide-sugar biosynthesis; UDP-N-acetyl-alpha-D-glucosamine biosynthesis; N-acetyl-alpha-D-glucosamine 1-phosphate from alpha-D-glucosamine 6-phosphate (route II): step 2/2.</text>
</comment>
<comment type="pathway">
    <text evidence="1">Nucleotide-sugar biosynthesis; UDP-N-acetyl-alpha-D-glucosamine biosynthesis; UDP-N-acetyl-alpha-D-glucosamine from N-acetyl-alpha-D-glucosamine 1-phosphate: step 1/1.</text>
</comment>
<comment type="pathway">
    <text evidence="1">Bacterial outer membrane biogenesis; LPS lipid A biosynthesis.</text>
</comment>
<comment type="subunit">
    <text evidence="1">Homotrimer.</text>
</comment>
<comment type="subcellular location">
    <subcellularLocation>
        <location evidence="1">Cytoplasm</location>
    </subcellularLocation>
</comment>
<comment type="similarity">
    <text evidence="1">In the N-terminal section; belongs to the N-acetylglucosamine-1-phosphate uridyltransferase family.</text>
</comment>
<comment type="similarity">
    <text evidence="1">In the C-terminal section; belongs to the transferase hexapeptide repeat family.</text>
</comment>
<evidence type="ECO:0000255" key="1">
    <source>
        <dbReference type="HAMAP-Rule" id="MF_01631"/>
    </source>
</evidence>